<organism>
    <name type="scientific">Roseiflexus castenholzii (strain DSM 13941 / HLO8)</name>
    <dbReference type="NCBI Taxonomy" id="383372"/>
    <lineage>
        <taxon>Bacteria</taxon>
        <taxon>Bacillati</taxon>
        <taxon>Chloroflexota</taxon>
        <taxon>Chloroflexia</taxon>
        <taxon>Chloroflexales</taxon>
        <taxon>Roseiflexineae</taxon>
        <taxon>Roseiflexaceae</taxon>
        <taxon>Roseiflexus</taxon>
    </lineage>
</organism>
<accession>A7NN87</accession>
<feature type="chain" id="PRO_1000078676" description="Protein RecA">
    <location>
        <begin position="1"/>
        <end position="353"/>
    </location>
</feature>
<feature type="binding site" evidence="1">
    <location>
        <begin position="68"/>
        <end position="75"/>
    </location>
    <ligand>
        <name>ATP</name>
        <dbReference type="ChEBI" id="CHEBI:30616"/>
    </ligand>
</feature>
<name>RECA_ROSCS</name>
<dbReference type="EMBL" id="CP000804">
    <property type="protein sequence ID" value="ABU59020.1"/>
    <property type="molecule type" value="Genomic_DNA"/>
</dbReference>
<dbReference type="RefSeq" id="WP_012121444.1">
    <property type="nucleotide sequence ID" value="NC_009767.1"/>
</dbReference>
<dbReference type="SMR" id="A7NN87"/>
<dbReference type="STRING" id="383372.Rcas_2960"/>
<dbReference type="KEGG" id="rca:Rcas_2960"/>
<dbReference type="eggNOG" id="COG0468">
    <property type="taxonomic scope" value="Bacteria"/>
</dbReference>
<dbReference type="HOGENOM" id="CLU_040469_3_2_0"/>
<dbReference type="OrthoDB" id="9776733at2"/>
<dbReference type="Proteomes" id="UP000000263">
    <property type="component" value="Chromosome"/>
</dbReference>
<dbReference type="GO" id="GO:0005829">
    <property type="term" value="C:cytosol"/>
    <property type="evidence" value="ECO:0007669"/>
    <property type="project" value="TreeGrafter"/>
</dbReference>
<dbReference type="GO" id="GO:0005524">
    <property type="term" value="F:ATP binding"/>
    <property type="evidence" value="ECO:0007669"/>
    <property type="project" value="UniProtKB-UniRule"/>
</dbReference>
<dbReference type="GO" id="GO:0016887">
    <property type="term" value="F:ATP hydrolysis activity"/>
    <property type="evidence" value="ECO:0007669"/>
    <property type="project" value="InterPro"/>
</dbReference>
<dbReference type="GO" id="GO:0140664">
    <property type="term" value="F:ATP-dependent DNA damage sensor activity"/>
    <property type="evidence" value="ECO:0007669"/>
    <property type="project" value="InterPro"/>
</dbReference>
<dbReference type="GO" id="GO:0003684">
    <property type="term" value="F:damaged DNA binding"/>
    <property type="evidence" value="ECO:0007669"/>
    <property type="project" value="UniProtKB-UniRule"/>
</dbReference>
<dbReference type="GO" id="GO:0003697">
    <property type="term" value="F:single-stranded DNA binding"/>
    <property type="evidence" value="ECO:0007669"/>
    <property type="project" value="UniProtKB-UniRule"/>
</dbReference>
<dbReference type="GO" id="GO:0006310">
    <property type="term" value="P:DNA recombination"/>
    <property type="evidence" value="ECO:0007669"/>
    <property type="project" value="UniProtKB-UniRule"/>
</dbReference>
<dbReference type="GO" id="GO:0006281">
    <property type="term" value="P:DNA repair"/>
    <property type="evidence" value="ECO:0007669"/>
    <property type="project" value="UniProtKB-UniRule"/>
</dbReference>
<dbReference type="GO" id="GO:0009432">
    <property type="term" value="P:SOS response"/>
    <property type="evidence" value="ECO:0007669"/>
    <property type="project" value="UniProtKB-UniRule"/>
</dbReference>
<dbReference type="CDD" id="cd00983">
    <property type="entry name" value="RecA"/>
    <property type="match status" value="1"/>
</dbReference>
<dbReference type="FunFam" id="3.40.50.300:FF:000087">
    <property type="entry name" value="Recombinase RecA"/>
    <property type="match status" value="1"/>
</dbReference>
<dbReference type="Gene3D" id="3.40.50.300">
    <property type="entry name" value="P-loop containing nucleotide triphosphate hydrolases"/>
    <property type="match status" value="1"/>
</dbReference>
<dbReference type="HAMAP" id="MF_00268">
    <property type="entry name" value="RecA"/>
    <property type="match status" value="1"/>
</dbReference>
<dbReference type="InterPro" id="IPR003593">
    <property type="entry name" value="AAA+_ATPase"/>
</dbReference>
<dbReference type="InterPro" id="IPR013765">
    <property type="entry name" value="DNA_recomb/repair_RecA"/>
</dbReference>
<dbReference type="InterPro" id="IPR020584">
    <property type="entry name" value="DNA_recomb/repair_RecA_CS"/>
</dbReference>
<dbReference type="InterPro" id="IPR027417">
    <property type="entry name" value="P-loop_NTPase"/>
</dbReference>
<dbReference type="InterPro" id="IPR049261">
    <property type="entry name" value="RecA-like_C"/>
</dbReference>
<dbReference type="InterPro" id="IPR049428">
    <property type="entry name" value="RecA-like_N"/>
</dbReference>
<dbReference type="InterPro" id="IPR020588">
    <property type="entry name" value="RecA_ATP-bd"/>
</dbReference>
<dbReference type="InterPro" id="IPR023400">
    <property type="entry name" value="RecA_C_sf"/>
</dbReference>
<dbReference type="InterPro" id="IPR020587">
    <property type="entry name" value="RecA_monomer-monomer_interface"/>
</dbReference>
<dbReference type="NCBIfam" id="TIGR02012">
    <property type="entry name" value="tigrfam_recA"/>
    <property type="match status" value="1"/>
</dbReference>
<dbReference type="PANTHER" id="PTHR45900:SF1">
    <property type="entry name" value="MITOCHONDRIAL DNA REPAIR PROTEIN RECA HOMOLOG-RELATED"/>
    <property type="match status" value="1"/>
</dbReference>
<dbReference type="PANTHER" id="PTHR45900">
    <property type="entry name" value="RECA"/>
    <property type="match status" value="1"/>
</dbReference>
<dbReference type="Pfam" id="PF00154">
    <property type="entry name" value="RecA"/>
    <property type="match status" value="1"/>
</dbReference>
<dbReference type="Pfam" id="PF21096">
    <property type="entry name" value="RecA_C"/>
    <property type="match status" value="1"/>
</dbReference>
<dbReference type="PRINTS" id="PR00142">
    <property type="entry name" value="RECA"/>
</dbReference>
<dbReference type="SMART" id="SM00382">
    <property type="entry name" value="AAA"/>
    <property type="match status" value="1"/>
</dbReference>
<dbReference type="SUPFAM" id="SSF52540">
    <property type="entry name" value="P-loop containing nucleoside triphosphate hydrolases"/>
    <property type="match status" value="1"/>
</dbReference>
<dbReference type="SUPFAM" id="SSF54752">
    <property type="entry name" value="RecA protein, C-terminal domain"/>
    <property type="match status" value="1"/>
</dbReference>
<dbReference type="PROSITE" id="PS00321">
    <property type="entry name" value="RECA_1"/>
    <property type="match status" value="1"/>
</dbReference>
<dbReference type="PROSITE" id="PS50162">
    <property type="entry name" value="RECA_2"/>
    <property type="match status" value="1"/>
</dbReference>
<dbReference type="PROSITE" id="PS50163">
    <property type="entry name" value="RECA_3"/>
    <property type="match status" value="1"/>
</dbReference>
<proteinExistence type="inferred from homology"/>
<protein>
    <recommendedName>
        <fullName evidence="1">Protein RecA</fullName>
    </recommendedName>
    <alternativeName>
        <fullName evidence="1">Recombinase A</fullName>
    </alternativeName>
</protein>
<reference key="1">
    <citation type="submission" date="2007-08" db="EMBL/GenBank/DDBJ databases">
        <title>Complete sequence of Roseiflexus castenholzii DSM 13941.</title>
        <authorList>
            <consortium name="US DOE Joint Genome Institute"/>
            <person name="Copeland A."/>
            <person name="Lucas S."/>
            <person name="Lapidus A."/>
            <person name="Barry K."/>
            <person name="Glavina del Rio T."/>
            <person name="Dalin E."/>
            <person name="Tice H."/>
            <person name="Pitluck S."/>
            <person name="Thompson L.S."/>
            <person name="Brettin T."/>
            <person name="Bruce D."/>
            <person name="Detter J.C."/>
            <person name="Han C."/>
            <person name="Tapia R."/>
            <person name="Schmutz J."/>
            <person name="Larimer F."/>
            <person name="Land M."/>
            <person name="Hauser L."/>
            <person name="Kyrpides N."/>
            <person name="Mikhailova N."/>
            <person name="Bryant D.A."/>
            <person name="Hanada S."/>
            <person name="Tsukatani Y."/>
            <person name="Richardson P."/>
        </authorList>
    </citation>
    <scope>NUCLEOTIDE SEQUENCE [LARGE SCALE GENOMIC DNA]</scope>
    <source>
        <strain>DSM 13941 / HLO8</strain>
    </source>
</reference>
<keyword id="KW-0067">ATP-binding</keyword>
<keyword id="KW-0963">Cytoplasm</keyword>
<keyword id="KW-0227">DNA damage</keyword>
<keyword id="KW-0233">DNA recombination</keyword>
<keyword id="KW-0234">DNA repair</keyword>
<keyword id="KW-0238">DNA-binding</keyword>
<keyword id="KW-0547">Nucleotide-binding</keyword>
<keyword id="KW-1185">Reference proteome</keyword>
<keyword id="KW-0742">SOS response</keyword>
<evidence type="ECO:0000255" key="1">
    <source>
        <dbReference type="HAMAP-Rule" id="MF_00268"/>
    </source>
</evidence>
<gene>
    <name evidence="1" type="primary">recA</name>
    <name type="ordered locus">Rcas_2960</name>
</gene>
<sequence length="353" mass="37959">MALSPEKEKALAAAMSQIDRKYGKGSIMRMGEASSKLAIEVIPTGSIALDIALGVGGVPRGRVVEIYGPESSGKTTLAQHIIAEAQKMGGVAAFIDAEHAFDPVYAKRCGVDVDNLLVSQPDYGEQALEICETLVRSNAVDVVVVDSVAALVPRAEIEGDMGDSLPGLQARLMSQALRKLSGAISKSRVVVIFLNQLRLKIGVMFGSPETTTGGQALKFYASVRMDIRRIETLKNGQETIGSRTRVKVVKNKVAPPFRQAEFDIMHNEGISRAGNILDVGVELDIIRKSGAWFYLGEDRLGQGRENAKQFLNENPALADEIERLIRAHAMAAPISIAASKADDVVDDAGLFEE</sequence>
<comment type="function">
    <text evidence="1">Can catalyze the hydrolysis of ATP in the presence of single-stranded DNA, the ATP-dependent uptake of single-stranded DNA by duplex DNA, and the ATP-dependent hybridization of homologous single-stranded DNAs. It interacts with LexA causing its activation and leading to its autocatalytic cleavage.</text>
</comment>
<comment type="subcellular location">
    <subcellularLocation>
        <location evidence="1">Cytoplasm</location>
    </subcellularLocation>
</comment>
<comment type="similarity">
    <text evidence="1">Belongs to the RecA family.</text>
</comment>